<reference key="1">
    <citation type="journal article" date="2005" name="Science">
        <title>The transcriptional landscape of the mammalian genome.</title>
        <authorList>
            <person name="Carninci P."/>
            <person name="Kasukawa T."/>
            <person name="Katayama S."/>
            <person name="Gough J."/>
            <person name="Frith M.C."/>
            <person name="Maeda N."/>
            <person name="Oyama R."/>
            <person name="Ravasi T."/>
            <person name="Lenhard B."/>
            <person name="Wells C."/>
            <person name="Kodzius R."/>
            <person name="Shimokawa K."/>
            <person name="Bajic V.B."/>
            <person name="Brenner S.E."/>
            <person name="Batalov S."/>
            <person name="Forrest A.R."/>
            <person name="Zavolan M."/>
            <person name="Davis M.J."/>
            <person name="Wilming L.G."/>
            <person name="Aidinis V."/>
            <person name="Allen J.E."/>
            <person name="Ambesi-Impiombato A."/>
            <person name="Apweiler R."/>
            <person name="Aturaliya R.N."/>
            <person name="Bailey T.L."/>
            <person name="Bansal M."/>
            <person name="Baxter L."/>
            <person name="Beisel K.W."/>
            <person name="Bersano T."/>
            <person name="Bono H."/>
            <person name="Chalk A.M."/>
            <person name="Chiu K.P."/>
            <person name="Choudhary V."/>
            <person name="Christoffels A."/>
            <person name="Clutterbuck D.R."/>
            <person name="Crowe M.L."/>
            <person name="Dalla E."/>
            <person name="Dalrymple B.P."/>
            <person name="de Bono B."/>
            <person name="Della Gatta G."/>
            <person name="di Bernardo D."/>
            <person name="Down T."/>
            <person name="Engstrom P."/>
            <person name="Fagiolini M."/>
            <person name="Faulkner G."/>
            <person name="Fletcher C.F."/>
            <person name="Fukushima T."/>
            <person name="Furuno M."/>
            <person name="Futaki S."/>
            <person name="Gariboldi M."/>
            <person name="Georgii-Hemming P."/>
            <person name="Gingeras T.R."/>
            <person name="Gojobori T."/>
            <person name="Green R.E."/>
            <person name="Gustincich S."/>
            <person name="Harbers M."/>
            <person name="Hayashi Y."/>
            <person name="Hensch T.K."/>
            <person name="Hirokawa N."/>
            <person name="Hill D."/>
            <person name="Huminiecki L."/>
            <person name="Iacono M."/>
            <person name="Ikeo K."/>
            <person name="Iwama A."/>
            <person name="Ishikawa T."/>
            <person name="Jakt M."/>
            <person name="Kanapin A."/>
            <person name="Katoh M."/>
            <person name="Kawasawa Y."/>
            <person name="Kelso J."/>
            <person name="Kitamura H."/>
            <person name="Kitano H."/>
            <person name="Kollias G."/>
            <person name="Krishnan S.P."/>
            <person name="Kruger A."/>
            <person name="Kummerfeld S.K."/>
            <person name="Kurochkin I.V."/>
            <person name="Lareau L.F."/>
            <person name="Lazarevic D."/>
            <person name="Lipovich L."/>
            <person name="Liu J."/>
            <person name="Liuni S."/>
            <person name="McWilliam S."/>
            <person name="Madan Babu M."/>
            <person name="Madera M."/>
            <person name="Marchionni L."/>
            <person name="Matsuda H."/>
            <person name="Matsuzawa S."/>
            <person name="Miki H."/>
            <person name="Mignone F."/>
            <person name="Miyake S."/>
            <person name="Morris K."/>
            <person name="Mottagui-Tabar S."/>
            <person name="Mulder N."/>
            <person name="Nakano N."/>
            <person name="Nakauchi H."/>
            <person name="Ng P."/>
            <person name="Nilsson R."/>
            <person name="Nishiguchi S."/>
            <person name="Nishikawa S."/>
            <person name="Nori F."/>
            <person name="Ohara O."/>
            <person name="Okazaki Y."/>
            <person name="Orlando V."/>
            <person name="Pang K.C."/>
            <person name="Pavan W.J."/>
            <person name="Pavesi G."/>
            <person name="Pesole G."/>
            <person name="Petrovsky N."/>
            <person name="Piazza S."/>
            <person name="Reed J."/>
            <person name="Reid J.F."/>
            <person name="Ring B.Z."/>
            <person name="Ringwald M."/>
            <person name="Rost B."/>
            <person name="Ruan Y."/>
            <person name="Salzberg S.L."/>
            <person name="Sandelin A."/>
            <person name="Schneider C."/>
            <person name="Schoenbach C."/>
            <person name="Sekiguchi K."/>
            <person name="Semple C.A."/>
            <person name="Seno S."/>
            <person name="Sessa L."/>
            <person name="Sheng Y."/>
            <person name="Shibata Y."/>
            <person name="Shimada H."/>
            <person name="Shimada K."/>
            <person name="Silva D."/>
            <person name="Sinclair B."/>
            <person name="Sperling S."/>
            <person name="Stupka E."/>
            <person name="Sugiura K."/>
            <person name="Sultana R."/>
            <person name="Takenaka Y."/>
            <person name="Taki K."/>
            <person name="Tammoja K."/>
            <person name="Tan S.L."/>
            <person name="Tang S."/>
            <person name="Taylor M.S."/>
            <person name="Tegner J."/>
            <person name="Teichmann S.A."/>
            <person name="Ueda H.R."/>
            <person name="van Nimwegen E."/>
            <person name="Verardo R."/>
            <person name="Wei C.L."/>
            <person name="Yagi K."/>
            <person name="Yamanishi H."/>
            <person name="Zabarovsky E."/>
            <person name="Zhu S."/>
            <person name="Zimmer A."/>
            <person name="Hide W."/>
            <person name="Bult C."/>
            <person name="Grimmond S.M."/>
            <person name="Teasdale R.D."/>
            <person name="Liu E.T."/>
            <person name="Brusic V."/>
            <person name="Quackenbush J."/>
            <person name="Wahlestedt C."/>
            <person name="Mattick J.S."/>
            <person name="Hume D.A."/>
            <person name="Kai C."/>
            <person name="Sasaki D."/>
            <person name="Tomaru Y."/>
            <person name="Fukuda S."/>
            <person name="Kanamori-Katayama M."/>
            <person name="Suzuki M."/>
            <person name="Aoki J."/>
            <person name="Arakawa T."/>
            <person name="Iida J."/>
            <person name="Imamura K."/>
            <person name="Itoh M."/>
            <person name="Kato T."/>
            <person name="Kawaji H."/>
            <person name="Kawagashira N."/>
            <person name="Kawashima T."/>
            <person name="Kojima M."/>
            <person name="Kondo S."/>
            <person name="Konno H."/>
            <person name="Nakano K."/>
            <person name="Ninomiya N."/>
            <person name="Nishio T."/>
            <person name="Okada M."/>
            <person name="Plessy C."/>
            <person name="Shibata K."/>
            <person name="Shiraki T."/>
            <person name="Suzuki S."/>
            <person name="Tagami M."/>
            <person name="Waki K."/>
            <person name="Watahiki A."/>
            <person name="Okamura-Oho Y."/>
            <person name="Suzuki H."/>
            <person name="Kawai J."/>
            <person name="Hayashizaki Y."/>
        </authorList>
    </citation>
    <scope>NUCLEOTIDE SEQUENCE [LARGE SCALE MRNA]</scope>
    <source>
        <strain>NOD</strain>
    </source>
</reference>
<reference key="2">
    <citation type="journal article" date="2009" name="PLoS Biol.">
        <title>Lineage-specific biology revealed by a finished genome assembly of the mouse.</title>
        <authorList>
            <person name="Church D.M."/>
            <person name="Goodstadt L."/>
            <person name="Hillier L.W."/>
            <person name="Zody M.C."/>
            <person name="Goldstein S."/>
            <person name="She X."/>
            <person name="Bult C.J."/>
            <person name="Agarwala R."/>
            <person name="Cherry J.L."/>
            <person name="DiCuccio M."/>
            <person name="Hlavina W."/>
            <person name="Kapustin Y."/>
            <person name="Meric P."/>
            <person name="Maglott D."/>
            <person name="Birtle Z."/>
            <person name="Marques A.C."/>
            <person name="Graves T."/>
            <person name="Zhou S."/>
            <person name="Teague B."/>
            <person name="Potamousis K."/>
            <person name="Churas C."/>
            <person name="Place M."/>
            <person name="Herschleb J."/>
            <person name="Runnheim R."/>
            <person name="Forrest D."/>
            <person name="Amos-Landgraf J."/>
            <person name="Schwartz D.C."/>
            <person name="Cheng Z."/>
            <person name="Lindblad-Toh K."/>
            <person name="Eichler E.E."/>
            <person name="Ponting C.P."/>
        </authorList>
    </citation>
    <scope>NUCLEOTIDE SEQUENCE [LARGE SCALE GENOMIC DNA]</scope>
    <source>
        <strain>C57BL/6J</strain>
    </source>
</reference>
<reference key="3">
    <citation type="submission" date="2005-07" db="EMBL/GenBank/DDBJ databases">
        <authorList>
            <person name="Mural R.J."/>
            <person name="Adams M.D."/>
            <person name="Myers E.W."/>
            <person name="Smith H.O."/>
            <person name="Venter J.C."/>
        </authorList>
    </citation>
    <scope>NUCLEOTIDE SEQUENCE [LARGE SCALE GENOMIC DNA]</scope>
</reference>
<reference key="4">
    <citation type="journal article" date="2004" name="Genome Res.">
        <title>The status, quality, and expansion of the NIH full-length cDNA project: the Mammalian Gene Collection (MGC).</title>
        <authorList>
            <consortium name="The MGC Project Team"/>
        </authorList>
    </citation>
    <scope>NUCLEOTIDE SEQUENCE [LARGE SCALE MRNA]</scope>
</reference>
<reference key="5">
    <citation type="journal article" date="2007" name="Proc. Natl. Acad. Sci. U.S.A.">
        <title>Large-scale phosphorylation analysis of mouse liver.</title>
        <authorList>
            <person name="Villen J."/>
            <person name="Beausoleil S.A."/>
            <person name="Gerber S.A."/>
            <person name="Gygi S.P."/>
        </authorList>
    </citation>
    <scope>IDENTIFICATION BY MASS SPECTROMETRY [LARGE SCALE ANALYSIS]</scope>
    <source>
        <tissue>Liver</tissue>
    </source>
</reference>
<reference key="6">
    <citation type="journal article" date="2010" name="Cell">
        <title>A tissue-specific atlas of mouse protein phosphorylation and expression.</title>
        <authorList>
            <person name="Huttlin E.L."/>
            <person name="Jedrychowski M.P."/>
            <person name="Elias J.E."/>
            <person name="Goswami T."/>
            <person name="Rad R."/>
            <person name="Beausoleil S.A."/>
            <person name="Villen J."/>
            <person name="Haas W."/>
            <person name="Sowa M.E."/>
            <person name="Gygi S.P."/>
        </authorList>
    </citation>
    <scope>IDENTIFICATION BY MASS SPECTROMETRY [LARGE SCALE ANALYSIS]</scope>
    <source>
        <tissue>Brown adipose tissue</tissue>
        <tissue>Lung</tissue>
        <tissue>Spleen</tissue>
    </source>
</reference>
<evidence type="ECO:0000250" key="1"/>
<evidence type="ECO:0000250" key="2">
    <source>
        <dbReference type="UniProtKB" id="O95544"/>
    </source>
</evidence>
<evidence type="ECO:0000305" key="3"/>
<comment type="catalytic activity">
    <reaction>
        <text>NAD(+) + ATP = ADP + NADP(+) + H(+)</text>
        <dbReference type="Rhea" id="RHEA:18629"/>
        <dbReference type="ChEBI" id="CHEBI:15378"/>
        <dbReference type="ChEBI" id="CHEBI:30616"/>
        <dbReference type="ChEBI" id="CHEBI:57540"/>
        <dbReference type="ChEBI" id="CHEBI:58349"/>
        <dbReference type="ChEBI" id="CHEBI:456216"/>
        <dbReference type="EC" id="2.7.1.23"/>
    </reaction>
</comment>
<comment type="cofactor">
    <cofactor evidence="1">
        <name>a divalent metal cation</name>
        <dbReference type="ChEBI" id="CHEBI:60240"/>
    </cofactor>
</comment>
<comment type="similarity">
    <text evidence="3">Belongs to the NAD kinase family.</text>
</comment>
<gene>
    <name type="primary">Nadk</name>
</gene>
<proteinExistence type="evidence at protein level"/>
<feature type="chain" id="PRO_0000120714" description="NAD kinase">
    <location>
        <begin position="1"/>
        <end position="439"/>
    </location>
</feature>
<feature type="modified residue" description="Phosphoserine" evidence="2">
    <location>
        <position position="46"/>
    </location>
</feature>
<feature type="modified residue" description="Phosphoserine" evidence="2">
    <location>
        <position position="48"/>
    </location>
</feature>
<feature type="modified residue" description="Phosphoserine" evidence="2">
    <location>
        <position position="50"/>
    </location>
</feature>
<feature type="modified residue" description="Phosphoserine" evidence="2">
    <location>
        <position position="55"/>
    </location>
</feature>
<feature type="modified residue" description="Phosphoserine" evidence="2">
    <location>
        <position position="64"/>
    </location>
</feature>
<feature type="sequence conflict" description="In Ref. 4; AAH04012." evidence="3" ref="4">
    <original>A</original>
    <variation>V</variation>
    <location>
        <position position="430"/>
    </location>
</feature>
<organism>
    <name type="scientific">Mus musculus</name>
    <name type="common">Mouse</name>
    <dbReference type="NCBI Taxonomy" id="10090"/>
    <lineage>
        <taxon>Eukaryota</taxon>
        <taxon>Metazoa</taxon>
        <taxon>Chordata</taxon>
        <taxon>Craniata</taxon>
        <taxon>Vertebrata</taxon>
        <taxon>Euteleostomi</taxon>
        <taxon>Mammalia</taxon>
        <taxon>Eutheria</taxon>
        <taxon>Euarchontoglires</taxon>
        <taxon>Glires</taxon>
        <taxon>Rodentia</taxon>
        <taxon>Myomorpha</taxon>
        <taxon>Muroidea</taxon>
        <taxon>Muridae</taxon>
        <taxon>Murinae</taxon>
        <taxon>Mus</taxon>
        <taxon>Mus</taxon>
    </lineage>
</organism>
<dbReference type="EC" id="2.7.1.23"/>
<dbReference type="EMBL" id="AK170095">
    <property type="protein sequence ID" value="BAE41560.1"/>
    <property type="molecule type" value="mRNA"/>
</dbReference>
<dbReference type="EMBL" id="AK170608">
    <property type="protein sequence ID" value="BAE41908.1"/>
    <property type="molecule type" value="mRNA"/>
</dbReference>
<dbReference type="EMBL" id="AK170960">
    <property type="protein sequence ID" value="BAE42141.1"/>
    <property type="molecule type" value="mRNA"/>
</dbReference>
<dbReference type="EMBL" id="BC004012">
    <property type="protein sequence ID" value="AAH04012.1"/>
    <property type="molecule type" value="mRNA"/>
</dbReference>
<dbReference type="EMBL" id="AL627405">
    <property type="status" value="NOT_ANNOTATED_CDS"/>
    <property type="molecule type" value="Genomic_DNA"/>
</dbReference>
<dbReference type="EMBL" id="CH466594">
    <property type="protein sequence ID" value="EDL15013.1"/>
    <property type="molecule type" value="Genomic_DNA"/>
</dbReference>
<dbReference type="CCDS" id="CCDS19031.1"/>
<dbReference type="RefSeq" id="NP_001153109.1">
    <property type="nucleotide sequence ID" value="NM_001159637.1"/>
</dbReference>
<dbReference type="RefSeq" id="NP_619612.2">
    <property type="nucleotide sequence ID" value="NM_138671.3"/>
</dbReference>
<dbReference type="RefSeq" id="XP_006538725.1">
    <property type="nucleotide sequence ID" value="XM_006538662.5"/>
</dbReference>
<dbReference type="RefSeq" id="XP_006538726.1">
    <property type="nucleotide sequence ID" value="XM_006538663.5"/>
</dbReference>
<dbReference type="SMR" id="P58058"/>
<dbReference type="BioGRID" id="228663">
    <property type="interactions" value="3"/>
</dbReference>
<dbReference type="FunCoup" id="P58058">
    <property type="interactions" value="1160"/>
</dbReference>
<dbReference type="STRING" id="10090.ENSMUSP00000101238"/>
<dbReference type="iPTMnet" id="P58058"/>
<dbReference type="PhosphoSitePlus" id="P58058"/>
<dbReference type="SwissPalm" id="P58058"/>
<dbReference type="jPOST" id="P58058"/>
<dbReference type="PaxDb" id="10090-ENSMUSP00000101238"/>
<dbReference type="PeptideAtlas" id="P58058"/>
<dbReference type="ProteomicsDB" id="287558"/>
<dbReference type="Pumba" id="P58058"/>
<dbReference type="Antibodypedia" id="26587">
    <property type="antibodies" value="158 antibodies from 24 providers"/>
</dbReference>
<dbReference type="DNASU" id="192185"/>
<dbReference type="Ensembl" id="ENSMUST00000030939.14">
    <property type="protein sequence ID" value="ENSMUSP00000030939.8"/>
    <property type="gene ID" value="ENSMUSG00000029063.17"/>
</dbReference>
<dbReference type="Ensembl" id="ENSMUST00000105613.10">
    <property type="protein sequence ID" value="ENSMUSP00000101238.4"/>
    <property type="gene ID" value="ENSMUSG00000029063.17"/>
</dbReference>
<dbReference type="GeneID" id="192185"/>
<dbReference type="KEGG" id="mmu:192185"/>
<dbReference type="UCSC" id="uc008wdt.2">
    <property type="organism name" value="mouse"/>
</dbReference>
<dbReference type="AGR" id="MGI:2183149"/>
<dbReference type="CTD" id="65220"/>
<dbReference type="MGI" id="MGI:2183149">
    <property type="gene designation" value="Nadk"/>
</dbReference>
<dbReference type="VEuPathDB" id="HostDB:ENSMUSG00000029063"/>
<dbReference type="eggNOG" id="KOG2178">
    <property type="taxonomic scope" value="Eukaryota"/>
</dbReference>
<dbReference type="GeneTree" id="ENSGT00390000013792"/>
<dbReference type="HOGENOM" id="CLU_008831_10_3_1"/>
<dbReference type="InParanoid" id="P58058"/>
<dbReference type="OMA" id="QKAFKEW"/>
<dbReference type="OrthoDB" id="24581at2759"/>
<dbReference type="PhylomeDB" id="P58058"/>
<dbReference type="TreeFam" id="TF324076"/>
<dbReference type="Reactome" id="R-MMU-196807">
    <property type="pathway name" value="Nicotinate metabolism"/>
</dbReference>
<dbReference type="BioGRID-ORCS" id="192185">
    <property type="hits" value="13 hits in 78 CRISPR screens"/>
</dbReference>
<dbReference type="ChiTaRS" id="Nadk">
    <property type="organism name" value="mouse"/>
</dbReference>
<dbReference type="PRO" id="PR:P58058"/>
<dbReference type="Proteomes" id="UP000000589">
    <property type="component" value="Chromosome 4"/>
</dbReference>
<dbReference type="RNAct" id="P58058">
    <property type="molecule type" value="protein"/>
</dbReference>
<dbReference type="Bgee" id="ENSMUSG00000029063">
    <property type="expression patterns" value="Expressed in granulocyte and 246 other cell types or tissues"/>
</dbReference>
<dbReference type="ExpressionAtlas" id="P58058">
    <property type="expression patterns" value="baseline and differential"/>
</dbReference>
<dbReference type="GO" id="GO:0005829">
    <property type="term" value="C:cytosol"/>
    <property type="evidence" value="ECO:0000315"/>
    <property type="project" value="MGI"/>
</dbReference>
<dbReference type="GO" id="GO:0005524">
    <property type="term" value="F:ATP binding"/>
    <property type="evidence" value="ECO:0007669"/>
    <property type="project" value="UniProtKB-KW"/>
</dbReference>
<dbReference type="GO" id="GO:0046872">
    <property type="term" value="F:metal ion binding"/>
    <property type="evidence" value="ECO:0007669"/>
    <property type="project" value="UniProtKB-KW"/>
</dbReference>
<dbReference type="GO" id="GO:0003951">
    <property type="term" value="F:NAD+ kinase activity"/>
    <property type="evidence" value="ECO:0000315"/>
    <property type="project" value="MGI"/>
</dbReference>
<dbReference type="GO" id="GO:0019674">
    <property type="term" value="P:NAD metabolic process"/>
    <property type="evidence" value="ECO:0007669"/>
    <property type="project" value="InterPro"/>
</dbReference>
<dbReference type="GO" id="GO:0006741">
    <property type="term" value="P:NADP biosynthetic process"/>
    <property type="evidence" value="ECO:0000315"/>
    <property type="project" value="MGI"/>
</dbReference>
<dbReference type="GO" id="GO:0035774">
    <property type="term" value="P:positive regulation of insulin secretion involved in cellular response to glucose stimulus"/>
    <property type="evidence" value="ECO:0007669"/>
    <property type="project" value="Ensembl"/>
</dbReference>
<dbReference type="FunFam" id="3.40.50.10330:FF:000014">
    <property type="entry name" value="NAD kinase a"/>
    <property type="match status" value="1"/>
</dbReference>
<dbReference type="FunFam" id="2.60.200.30:FF:000003">
    <property type="entry name" value="NAD kinase b"/>
    <property type="match status" value="1"/>
</dbReference>
<dbReference type="Gene3D" id="3.40.50.10330">
    <property type="entry name" value="Probable inorganic polyphosphate/atp-NAD kinase, domain 1"/>
    <property type="match status" value="1"/>
</dbReference>
<dbReference type="Gene3D" id="2.60.200.30">
    <property type="entry name" value="Probable inorganic polyphosphate/atp-NAD kinase, domain 2"/>
    <property type="match status" value="1"/>
</dbReference>
<dbReference type="HAMAP" id="MF_00361">
    <property type="entry name" value="NAD_kinase"/>
    <property type="match status" value="1"/>
</dbReference>
<dbReference type="InterPro" id="IPR017438">
    <property type="entry name" value="ATP-NAD_kinase_N"/>
</dbReference>
<dbReference type="InterPro" id="IPR017437">
    <property type="entry name" value="ATP-NAD_kinase_PpnK-typ_C"/>
</dbReference>
<dbReference type="InterPro" id="IPR016064">
    <property type="entry name" value="NAD/diacylglycerol_kinase_sf"/>
</dbReference>
<dbReference type="InterPro" id="IPR002504">
    <property type="entry name" value="NADK"/>
</dbReference>
<dbReference type="PANTHER" id="PTHR20275">
    <property type="entry name" value="NAD KINASE"/>
    <property type="match status" value="1"/>
</dbReference>
<dbReference type="PANTHER" id="PTHR20275:SF0">
    <property type="entry name" value="NAD KINASE"/>
    <property type="match status" value="1"/>
</dbReference>
<dbReference type="Pfam" id="PF01513">
    <property type="entry name" value="NAD_kinase"/>
    <property type="match status" value="1"/>
</dbReference>
<dbReference type="Pfam" id="PF20143">
    <property type="entry name" value="NAD_kinase_C"/>
    <property type="match status" value="1"/>
</dbReference>
<dbReference type="SUPFAM" id="SSF111331">
    <property type="entry name" value="NAD kinase/diacylglycerol kinase-like"/>
    <property type="match status" value="1"/>
</dbReference>
<sequence length="439" mass="48597">MEMEQEKMNLSQELSADSASYNCSACHGDETWSYNHPIRGRAKSRSLSASPALGSTKEFRRTRSLHGPCPVTTFGPKACVLQNPQTIMHIQDPASQRLTWNKSPKSVLVIKKIRDASLLQPFKELCIYLMEENNMIVYVEKKVLEDPAIVSDENFGPVKKKFCTFREDYDDISNQIDFIICLGGDGTLLYASSLFQGSVPPVMAFHLGSLGFLTPFNFENFQSQVNQVIEGNAAVILRSRLKVRVVKEPRDKKTAIHNGLSENGLDTEGGKQAMQYQVLNEVVIDRGPSSYLSNVDVYLDGHLITTVQGDGVIVSTPTGSTAYAAAAGASMVHPNVPAIMVTPICPHSLSFRPIVVPAGVELKIMLSPEARNTAWVSFDGRKRQEIRHGDSISITTSCYPLPSICVCDPVSDWFESLAQCLHWNVRKKQAHFPEDEEDS</sequence>
<accession>P58058</accession>
<accession>Q3TCP7</accession>
<keyword id="KW-0067">ATP-binding</keyword>
<keyword id="KW-0418">Kinase</keyword>
<keyword id="KW-0479">Metal-binding</keyword>
<keyword id="KW-0520">NAD</keyword>
<keyword id="KW-0521">NADP</keyword>
<keyword id="KW-0547">Nucleotide-binding</keyword>
<keyword id="KW-0597">Phosphoprotein</keyword>
<keyword id="KW-1185">Reference proteome</keyword>
<keyword id="KW-0808">Transferase</keyword>
<name>NADK_MOUSE</name>
<protein>
    <recommendedName>
        <fullName>NAD kinase</fullName>
        <ecNumber>2.7.1.23</ecNumber>
    </recommendedName>
    <alternativeName>
        <fullName>Poly(P)/ATP NAD kinase</fullName>
    </alternativeName>
</protein>